<reference key="1">
    <citation type="journal article" date="2006" name="Nature">
        <title>DNA sequence of human chromosome 17 and analysis of rearrangement in the human lineage.</title>
        <authorList>
            <person name="Zody M.C."/>
            <person name="Garber M."/>
            <person name="Adams D.J."/>
            <person name="Sharpe T."/>
            <person name="Harrow J."/>
            <person name="Lupski J.R."/>
            <person name="Nicholson C."/>
            <person name="Searle S.M."/>
            <person name="Wilming L."/>
            <person name="Young S.K."/>
            <person name="Abouelleil A."/>
            <person name="Allen N.R."/>
            <person name="Bi W."/>
            <person name="Bloom T."/>
            <person name="Borowsky M.L."/>
            <person name="Bugalter B.E."/>
            <person name="Butler J."/>
            <person name="Chang J.L."/>
            <person name="Chen C.-K."/>
            <person name="Cook A."/>
            <person name="Corum B."/>
            <person name="Cuomo C.A."/>
            <person name="de Jong P.J."/>
            <person name="DeCaprio D."/>
            <person name="Dewar K."/>
            <person name="FitzGerald M."/>
            <person name="Gilbert J."/>
            <person name="Gibson R."/>
            <person name="Gnerre S."/>
            <person name="Goldstein S."/>
            <person name="Grafham D.V."/>
            <person name="Grocock R."/>
            <person name="Hafez N."/>
            <person name="Hagopian D.S."/>
            <person name="Hart E."/>
            <person name="Norman C.H."/>
            <person name="Humphray S."/>
            <person name="Jaffe D.B."/>
            <person name="Jones M."/>
            <person name="Kamal M."/>
            <person name="Khodiyar V.K."/>
            <person name="LaButti K."/>
            <person name="Laird G."/>
            <person name="Lehoczky J."/>
            <person name="Liu X."/>
            <person name="Lokyitsang T."/>
            <person name="Loveland J."/>
            <person name="Lui A."/>
            <person name="Macdonald P."/>
            <person name="Major J.E."/>
            <person name="Matthews L."/>
            <person name="Mauceli E."/>
            <person name="McCarroll S.A."/>
            <person name="Mihalev A.H."/>
            <person name="Mudge J."/>
            <person name="Nguyen C."/>
            <person name="Nicol R."/>
            <person name="O'Leary S.B."/>
            <person name="Osoegawa K."/>
            <person name="Schwartz D.C."/>
            <person name="Shaw-Smith C."/>
            <person name="Stankiewicz P."/>
            <person name="Steward C."/>
            <person name="Swarbreck D."/>
            <person name="Venkataraman V."/>
            <person name="Whittaker C.A."/>
            <person name="Yang X."/>
            <person name="Zimmer A.R."/>
            <person name="Bradley A."/>
            <person name="Hubbard T."/>
            <person name="Birren B.W."/>
            <person name="Rogers J."/>
            <person name="Lander E.S."/>
            <person name="Nusbaum C."/>
        </authorList>
    </citation>
    <scope>NUCLEOTIDE SEQUENCE [LARGE SCALE GENOMIC DNA]</scope>
</reference>
<reference key="2">
    <citation type="journal article" date="2004" name="Genome Res.">
        <title>The status, quality, and expansion of the NIH full-length cDNA project: the Mammalian Gene Collection (MGC).</title>
        <authorList>
            <consortium name="The MGC Project Team"/>
        </authorList>
    </citation>
    <scope>NUCLEOTIDE SEQUENCE [LARGE SCALE MRNA]</scope>
    <scope>VARIANTS GLY-222 AND PRO-509</scope>
    <source>
        <tissue>Brain</tissue>
        <tissue>Liver</tissue>
        <tissue>Lymph</tissue>
    </source>
</reference>
<reference key="3">
    <citation type="journal article" date="2009" name="Anal. Chem.">
        <title>Lys-N and trypsin cover complementary parts of the phosphoproteome in a refined SCX-based approach.</title>
        <authorList>
            <person name="Gauci S."/>
            <person name="Helbig A.O."/>
            <person name="Slijper M."/>
            <person name="Krijgsveld J."/>
            <person name="Heck A.J."/>
            <person name="Mohammed S."/>
        </authorList>
    </citation>
    <scope>ACETYLATION [LARGE SCALE ANALYSIS] AT ALA-2</scope>
    <scope>CLEAVAGE OF INITIATOR METHIONINE [LARGE SCALE ANALYSIS]</scope>
    <scope>IDENTIFICATION BY MASS SPECTROMETRY [LARGE SCALE ANALYSIS]</scope>
</reference>
<reference key="4">
    <citation type="journal article" date="2012" name="Mol. Cell. Proteomics">
        <title>Comparative large-scale characterisation of plant vs. mammal proteins reveals similar and idiosyncratic N-alpha acetylation features.</title>
        <authorList>
            <person name="Bienvenut W.V."/>
            <person name="Sumpton D."/>
            <person name="Martinez A."/>
            <person name="Lilla S."/>
            <person name="Espagne C."/>
            <person name="Meinnel T."/>
            <person name="Giglione C."/>
        </authorList>
    </citation>
    <scope>ACETYLATION [LARGE SCALE ANALYSIS] AT ALA-2</scope>
    <scope>CLEAVAGE OF INITIATOR METHIONINE [LARGE SCALE ANALYSIS]</scope>
    <scope>IDENTIFICATION BY MASS SPECTROMETRY [LARGE SCALE ANALYSIS]</scope>
</reference>
<reference key="5">
    <citation type="journal article" date="2014" name="Proc. Natl. Acad. Sci. U.S.A.">
        <title>TRIM65 regulates microRNA activity by ubiquitination of TNRC6.</title>
        <authorList>
            <person name="Li S."/>
            <person name="Wang L."/>
            <person name="Fu B."/>
            <person name="Berman M.A."/>
            <person name="Diallo A."/>
            <person name="Dorf M.E."/>
        </authorList>
    </citation>
    <scope>FUNCTION</scope>
    <scope>SUBCELLULAR LOCATION</scope>
    <scope>CATALYTIC ACTIVITY</scope>
    <scope>SUBUNIT</scope>
</reference>
<reference key="6">
    <citation type="journal article" date="2017" name="Nat. Commun.">
        <title>Structural basis for the recognition and degradation of host TRIM proteins by Salmonella effector SopA.</title>
        <authorList>
            <person name="Fiskin E."/>
            <person name="Bhogaraju S."/>
            <person name="Herhaus L."/>
            <person name="Kalayil S."/>
            <person name="Hahn M."/>
            <person name="Dikic I."/>
        </authorList>
    </citation>
    <scope>UBIQUITINATION AT LYS-206 BY SALMONELLA TYPHIMURIUM SOPA (MICROBIAL INFECTION)</scope>
</reference>
<reference key="7">
    <citation type="journal article" date="2017" name="Cell Death Dis.">
        <title>ARRDC4 regulates enterovirus 71-induced innate immune response by promoting K63 polyubiquitination of MDA5 through TRIM65.</title>
        <authorList>
            <person name="Meng J."/>
            <person name="Yao Z."/>
            <person name="He Y."/>
            <person name="Zhang R."/>
            <person name="Zhang Y."/>
            <person name="Yao X."/>
            <person name="Yang H."/>
            <person name="Chen L."/>
            <person name="Zhang Z."/>
            <person name="Zhang H."/>
            <person name="Bao X."/>
            <person name="Hu G."/>
            <person name="Wu T."/>
            <person name="Cheng J."/>
        </authorList>
    </citation>
    <scope>FUNCTION</scope>
    <scope>INTERACTION WITH ARRDC4</scope>
</reference>
<reference key="8">
    <citation type="journal article" date="2019" name="Cell Death Dis.">
        <title>Knockdown of TRIM65 inhibits autophagy and cisplatin resistance in A549/DDP cells by regulating miR-138-5p/ATG7.</title>
        <authorList>
            <person name="Pan X."/>
            <person name="Chen Y."/>
            <person name="Shen Y."/>
            <person name="Tantai J."/>
        </authorList>
    </citation>
    <scope>FUNCTION</scope>
</reference>
<reference key="9">
    <citation type="journal article" date="2020" name="J. Mol. Cell Biol.">
        <title>TRIM65 E3 ligase targets VCAM-1 degradation to limit LPS-induced lung inflammation.</title>
        <authorList>
            <person name="Li Y."/>
            <person name="Huang X."/>
            <person name="Guo F."/>
            <person name="Lei T."/>
            <person name="Li S."/>
            <person name="Monaghan-Nichols P."/>
            <person name="Jiang Z."/>
            <person name="Xin H.B."/>
            <person name="Fu M."/>
        </authorList>
    </citation>
    <scope>FUNCTION</scope>
    <scope>CATALYTIC ACTIVITY</scope>
</reference>
<reference key="10">
    <citation type="journal article" date="2021" name="Front. Immunol.">
        <title>The E3 Ubiquitin Ligase TRIM65 Negatively Regulates Inflammasome Activation Through Promoting Ubiquitination of NLRP3.</title>
        <authorList>
            <person name="Tang T."/>
            <person name="Li P."/>
            <person name="Zhou X."/>
            <person name="Wang R."/>
            <person name="Fan X."/>
            <person name="Yang M."/>
            <person name="Qi K."/>
        </authorList>
    </citation>
    <scope>FUNCTION</scope>
    <scope>SUBCELLULAR LOCATION</scope>
</reference>
<reference evidence="16 17 18" key="11">
    <citation type="journal article" date="2021" name="Mol. Cell">
        <title>Structural analysis of RIG-I-like receptors reveals ancient rules of engagement between diverse RNA helicases and TRIM ubiquitin ligases.</title>
        <authorList>
            <person name="Kato K."/>
            <person name="Ahmad S."/>
            <person name="Zhu Z."/>
            <person name="Young J.M."/>
            <person name="Mu X."/>
            <person name="Park S."/>
            <person name="Malik H.S."/>
            <person name="Hur S."/>
        </authorList>
    </citation>
    <scope>X-RAY CRYSTALLOGRAPHY (1.92 ANGSTROMS) OF 312-502</scope>
    <scope>FUNCTION</scope>
</reference>
<name>TRI65_HUMAN</name>
<sequence>MAAQLLEEKLTCAICLGLYQDPVTLPCGHNFCGACIRDWWDRCGKACPECREPFPDGAELRRNVALSGVLEVVRAGPARDPGPDPGPGPDPAARCPRHGRPLELFCRTEGRCVCSVCTVRECRLHERALLDAERLKREAQLRASLEVTQQQATQAEGQLLELRKQSSQIQNSACILASWVSGKFSSLLQALEIQHTTALRSIEVAKTQALAQARDEEQRLRVHLEAVARHGCRIRELLEQVDEQTFLQESQLLQPPGPLGPLTPLQWDEDQQLGDLKQLLSRLCGLLLEEGSHPGAPAKPVDLAPVEAPGPLAPVPSTVCPLRRKLWQNYRNLTFDPVSANRHFYLSRQDQQVKHCRQSRGPGGPGSFELWQVQCAQSFQAGHHYWEVRASDHSVTLGVSYPQLPRCRLGPHTDNIGRGPCSWGLCVQEDSLQAWHNGEAQRLPGVSGRLLGMDLDLASGCLTFYSLEPQTQPLYTFHALFNQPLTPVFWLLEGRTLTLCHQPGAVFPLGPQEEVLS</sequence>
<keyword id="KW-0002">3D-structure</keyword>
<keyword id="KW-0007">Acetylation</keyword>
<keyword id="KW-0175">Coiled coil</keyword>
<keyword id="KW-0963">Cytoplasm</keyword>
<keyword id="KW-0391">Immunity</keyword>
<keyword id="KW-0399">Innate immunity</keyword>
<keyword id="KW-1017">Isopeptide bond</keyword>
<keyword id="KW-0479">Metal-binding</keyword>
<keyword id="KW-0597">Phosphoprotein</keyword>
<keyword id="KW-1267">Proteomics identification</keyword>
<keyword id="KW-1185">Reference proteome</keyword>
<keyword id="KW-0808">Transferase</keyword>
<keyword id="KW-0832">Ubl conjugation</keyword>
<keyword id="KW-0862">Zinc</keyword>
<keyword id="KW-0863">Zinc-finger</keyword>
<comment type="function">
    <text evidence="8 10 11 12 13 14">E3 ubiquitin ligase that plays a role in several processes including innate immnity, autophagy or inflammation (PubMed:28594402, PubMed:34512673). Negatively regulates miRNAs by modulating the ubiquitination and stability of TNRC6A, a protein involved in RNA-mediated gene silencing by both micro-RNAs (miRNAs) and short interfering RNAs (PubMed:24778252). This ubiquitination results in the suppressed expression of miR-138-5p leading to increased autophagy (PubMed:31160576). Upon enteroviral infection, promotes 'Lys-63'-mediated ubiquitination activation of IFIH1/MDA5 leading to innate signaling cascade (PubMed:28594402). Mechanistically, selectively recognizes MDA5 filaments that occur on dsRNAs (PubMed:33373584). Plays also a role in limitation of inflammation through different mechanisms. First, promotes 'Lys-48'-mediated ubiquitination of VCAM1 leading to its degradation and limitation of LPS-induced lung inflammation (PubMed:31310649). In addition, negatively regulates inflammasome activation by promoting 'lys48'-linked ubiquitination of NLRP3 which is critical for the inhibition of NLRP3 inflammasome activation in resting macrophages (PubMed:34512673).</text>
</comment>
<comment type="catalytic activity">
    <reaction evidence="8 12">
        <text>S-ubiquitinyl-[E2 ubiquitin-conjugating enzyme]-L-cysteine + [acceptor protein]-L-lysine = [E2 ubiquitin-conjugating enzyme]-L-cysteine + N(6)-ubiquitinyl-[acceptor protein]-L-lysine.</text>
        <dbReference type="EC" id="2.3.2.27"/>
    </reaction>
</comment>
<comment type="pathway">
    <text>Protein modification; protein ubiquitination.</text>
</comment>
<comment type="subunit">
    <text evidence="8 10">Homo-multimerizes (PubMed:24778252). Interacts with ARRDC4 (PubMed:28594402).</text>
</comment>
<comment type="subcellular location">
    <subcellularLocation>
        <location evidence="8 14">Cytoplasm</location>
    </subcellularLocation>
</comment>
<comment type="similarity">
    <text evidence="15">Belongs to the TRIM/RBCC family.</text>
</comment>
<comment type="sequence caution" evidence="15">
    <conflict type="erroneous initiation">
        <sequence resource="EMBL-CDS" id="AAH73831"/>
    </conflict>
    <text>Extended N-terminus.</text>
</comment>
<organism>
    <name type="scientific">Homo sapiens</name>
    <name type="common">Human</name>
    <dbReference type="NCBI Taxonomy" id="9606"/>
    <lineage>
        <taxon>Eukaryota</taxon>
        <taxon>Metazoa</taxon>
        <taxon>Chordata</taxon>
        <taxon>Craniata</taxon>
        <taxon>Vertebrata</taxon>
        <taxon>Euteleostomi</taxon>
        <taxon>Mammalia</taxon>
        <taxon>Eutheria</taxon>
        <taxon>Euarchontoglires</taxon>
        <taxon>Primates</taxon>
        <taxon>Haplorrhini</taxon>
        <taxon>Catarrhini</taxon>
        <taxon>Hominidae</taxon>
        <taxon>Homo</taxon>
    </lineage>
</organism>
<protein>
    <recommendedName>
        <fullName>E3 ubiquitin-protein ligase TRIM65</fullName>
        <ecNumber evidence="8 12">2.3.2.27</ecNumber>
    </recommendedName>
    <alternativeName>
        <fullName>Tripartite motif-containing protein 65</fullName>
    </alternativeName>
</protein>
<feature type="initiator methionine" description="Removed" evidence="19 20">
    <location>
        <position position="1"/>
    </location>
</feature>
<feature type="chain" id="PRO_0000249191" description="E3 ubiquitin-protein ligase TRIM65">
    <location>
        <begin position="2"/>
        <end position="517"/>
    </location>
</feature>
<feature type="domain" description="B30.2/SPRY" evidence="5">
    <location>
        <begin position="313"/>
        <end position="506"/>
    </location>
</feature>
<feature type="zinc finger region" description="RING-type" evidence="4">
    <location>
        <begin position="12"/>
        <end position="51"/>
    </location>
</feature>
<feature type="zinc finger region" description="B box-type" evidence="3">
    <location>
        <begin position="90"/>
        <end position="137"/>
    </location>
</feature>
<feature type="region of interest" description="Disordered" evidence="6">
    <location>
        <begin position="75"/>
        <end position="94"/>
    </location>
</feature>
<feature type="coiled-coil region" evidence="2">
    <location>
        <begin position="139"/>
        <end position="227"/>
    </location>
</feature>
<feature type="binding site" evidence="3">
    <location>
        <position position="95"/>
    </location>
    <ligand>
        <name>Zn(2+)</name>
        <dbReference type="ChEBI" id="CHEBI:29105"/>
    </ligand>
</feature>
<feature type="binding site" evidence="3">
    <location>
        <position position="98"/>
    </location>
    <ligand>
        <name>Zn(2+)</name>
        <dbReference type="ChEBI" id="CHEBI:29105"/>
    </ligand>
</feature>
<feature type="binding site" evidence="3">
    <location>
        <position position="117"/>
    </location>
    <ligand>
        <name>Zn(2+)</name>
        <dbReference type="ChEBI" id="CHEBI:29105"/>
    </ligand>
</feature>
<feature type="binding site" evidence="3">
    <location>
        <position position="125"/>
    </location>
    <ligand>
        <name>Zn(2+)</name>
        <dbReference type="ChEBI" id="CHEBI:29105"/>
    </ligand>
</feature>
<feature type="modified residue" description="N-acetylalanine" evidence="19 20">
    <location>
        <position position="2"/>
    </location>
</feature>
<feature type="modified residue" description="Phosphoserine" evidence="1">
    <location>
        <position position="185"/>
    </location>
</feature>
<feature type="cross-link" description="(Microbial infection) Glycyl lysine isopeptide (Lys-Gly) (interchain with G-Cter in ubiquitin)" evidence="9">
    <location>
        <position position="206"/>
    </location>
</feature>
<feature type="sequence variant" id="VAR_060245" description="In dbSNP:rs7222757." evidence="7">
    <original>V</original>
    <variation>G</variation>
    <location>
        <position position="222"/>
    </location>
</feature>
<feature type="sequence variant" id="VAR_057224" description="In dbSNP:rs34593741.">
    <original>G</original>
    <variation>R</variation>
    <location>
        <position position="364"/>
    </location>
</feature>
<feature type="sequence variant" id="VAR_057225" description="In dbSNP:rs9892938.">
    <original>G</original>
    <variation>S</variation>
    <location>
        <position position="366"/>
    </location>
</feature>
<feature type="sequence variant" id="VAR_060246" description="In dbSNP:rs3760128." evidence="7">
    <original>L</original>
    <variation>P</variation>
    <location>
        <position position="509"/>
    </location>
</feature>
<feature type="helix" evidence="21">
    <location>
        <begin position="321"/>
        <end position="326"/>
    </location>
</feature>
<feature type="helix" evidence="21">
    <location>
        <begin position="327"/>
        <end position="329"/>
    </location>
</feature>
<feature type="turn" evidence="21">
    <location>
        <begin position="337"/>
        <end position="339"/>
    </location>
</feature>
<feature type="strand" evidence="21">
    <location>
        <begin position="344"/>
        <end position="347"/>
    </location>
</feature>
<feature type="turn" evidence="21">
    <location>
        <begin position="348"/>
        <end position="351"/>
    </location>
</feature>
<feature type="strand" evidence="21">
    <location>
        <begin position="352"/>
        <end position="355"/>
    </location>
</feature>
<feature type="strand" evidence="21">
    <location>
        <begin position="369"/>
        <end position="376"/>
    </location>
</feature>
<feature type="strand" evidence="21">
    <location>
        <begin position="381"/>
        <end position="400"/>
    </location>
</feature>
<feature type="strand" evidence="21">
    <location>
        <begin position="422"/>
        <end position="427"/>
    </location>
</feature>
<feature type="strand" evidence="21">
    <location>
        <begin position="429"/>
        <end position="436"/>
    </location>
</feature>
<feature type="strand" evidence="21">
    <location>
        <begin position="439"/>
        <end position="444"/>
    </location>
</feature>
<feature type="strand" evidence="21">
    <location>
        <begin position="450"/>
        <end position="456"/>
    </location>
</feature>
<feature type="turn" evidence="21">
    <location>
        <begin position="457"/>
        <end position="460"/>
    </location>
</feature>
<feature type="strand" evidence="21">
    <location>
        <begin position="461"/>
        <end position="466"/>
    </location>
</feature>
<feature type="strand" evidence="21">
    <location>
        <begin position="468"/>
        <end position="470"/>
    </location>
</feature>
<feature type="strand" evidence="21">
    <location>
        <begin position="472"/>
        <end position="478"/>
    </location>
</feature>
<feature type="strand" evidence="21">
    <location>
        <begin position="485"/>
        <end position="491"/>
    </location>
</feature>
<feature type="strand" evidence="21">
    <location>
        <begin position="496"/>
        <end position="499"/>
    </location>
</feature>
<proteinExistence type="evidence at protein level"/>
<evidence type="ECO:0000250" key="1">
    <source>
        <dbReference type="UniProtKB" id="Q8BFW4"/>
    </source>
</evidence>
<evidence type="ECO:0000255" key="2"/>
<evidence type="ECO:0000255" key="3">
    <source>
        <dbReference type="PROSITE-ProRule" id="PRU00024"/>
    </source>
</evidence>
<evidence type="ECO:0000255" key="4">
    <source>
        <dbReference type="PROSITE-ProRule" id="PRU00175"/>
    </source>
</evidence>
<evidence type="ECO:0000255" key="5">
    <source>
        <dbReference type="PROSITE-ProRule" id="PRU00548"/>
    </source>
</evidence>
<evidence type="ECO:0000256" key="6">
    <source>
        <dbReference type="SAM" id="MobiDB-lite"/>
    </source>
</evidence>
<evidence type="ECO:0000269" key="7">
    <source>
    </source>
</evidence>
<evidence type="ECO:0000269" key="8">
    <source>
    </source>
</evidence>
<evidence type="ECO:0000269" key="9">
    <source>
    </source>
</evidence>
<evidence type="ECO:0000269" key="10">
    <source>
    </source>
</evidence>
<evidence type="ECO:0000269" key="11">
    <source>
    </source>
</evidence>
<evidence type="ECO:0000269" key="12">
    <source>
    </source>
</evidence>
<evidence type="ECO:0000269" key="13">
    <source>
    </source>
</evidence>
<evidence type="ECO:0000269" key="14">
    <source>
    </source>
</evidence>
<evidence type="ECO:0000305" key="15"/>
<evidence type="ECO:0007744" key="16">
    <source>
        <dbReference type="PDB" id="7JL0"/>
    </source>
</evidence>
<evidence type="ECO:0007744" key="17">
    <source>
        <dbReference type="PDB" id="7JL2"/>
    </source>
</evidence>
<evidence type="ECO:0007744" key="18">
    <source>
        <dbReference type="PDB" id="7JL4"/>
    </source>
</evidence>
<evidence type="ECO:0007744" key="19">
    <source>
    </source>
</evidence>
<evidence type="ECO:0007744" key="20">
    <source>
    </source>
</evidence>
<evidence type="ECO:0007829" key="21">
    <source>
        <dbReference type="PDB" id="7JL4"/>
    </source>
</evidence>
<dbReference type="EC" id="2.3.2.27" evidence="8 12"/>
<dbReference type="EMBL" id="AC087289">
    <property type="status" value="NOT_ANNOTATED_CDS"/>
    <property type="molecule type" value="Genomic_DNA"/>
</dbReference>
<dbReference type="EMBL" id="BC006138">
    <property type="protein sequence ID" value="AAH06138.1"/>
    <property type="molecule type" value="mRNA"/>
</dbReference>
<dbReference type="EMBL" id="BC021259">
    <property type="protein sequence ID" value="AAH21259.2"/>
    <property type="molecule type" value="mRNA"/>
</dbReference>
<dbReference type="EMBL" id="BC073831">
    <property type="protein sequence ID" value="AAH73831.1"/>
    <property type="status" value="ALT_INIT"/>
    <property type="molecule type" value="mRNA"/>
</dbReference>
<dbReference type="EMBL" id="BC098412">
    <property type="protein sequence ID" value="AAH98412.1"/>
    <property type="molecule type" value="mRNA"/>
</dbReference>
<dbReference type="CCDS" id="CCDS11732.1"/>
<dbReference type="RefSeq" id="NP_001243053.1">
    <property type="nucleotide sequence ID" value="NM_001256124.1"/>
</dbReference>
<dbReference type="RefSeq" id="NP_775818.2">
    <property type="nucleotide sequence ID" value="NM_173547.3"/>
</dbReference>
<dbReference type="PDB" id="7JL0">
    <property type="method" value="EM"/>
    <property type="resolution" value="4.30 A"/>
    <property type="chains" value="B=312-502"/>
</dbReference>
<dbReference type="PDB" id="7JL2">
    <property type="method" value="EM"/>
    <property type="resolution" value="4.30 A"/>
    <property type="chains" value="B/D/F=312-502"/>
</dbReference>
<dbReference type="PDB" id="7JL4">
    <property type="method" value="X-ray"/>
    <property type="resolution" value="1.92 A"/>
    <property type="chains" value="A/B/C=312-502"/>
</dbReference>
<dbReference type="PDBsum" id="7JL0"/>
<dbReference type="PDBsum" id="7JL2"/>
<dbReference type="PDBsum" id="7JL4"/>
<dbReference type="EMDB" id="EMD-22368"/>
<dbReference type="EMDB" id="EMD-22370"/>
<dbReference type="SMR" id="Q6PJ69"/>
<dbReference type="BioGRID" id="128382">
    <property type="interactions" value="83"/>
</dbReference>
<dbReference type="FunCoup" id="Q6PJ69">
    <property type="interactions" value="1511"/>
</dbReference>
<dbReference type="IntAct" id="Q6PJ69">
    <property type="interactions" value="44"/>
</dbReference>
<dbReference type="MINT" id="Q6PJ69"/>
<dbReference type="STRING" id="9606.ENSP00000269383"/>
<dbReference type="GlyGen" id="Q6PJ69">
    <property type="glycosylation" value="1 site, 1 O-linked glycan (1 site)"/>
</dbReference>
<dbReference type="iPTMnet" id="Q6PJ69"/>
<dbReference type="PhosphoSitePlus" id="Q6PJ69"/>
<dbReference type="BioMuta" id="TRIM65"/>
<dbReference type="DMDM" id="296453004"/>
<dbReference type="jPOST" id="Q6PJ69"/>
<dbReference type="MassIVE" id="Q6PJ69"/>
<dbReference type="PaxDb" id="9606-ENSP00000269383"/>
<dbReference type="PeptideAtlas" id="Q6PJ69"/>
<dbReference type="ProteomicsDB" id="67192"/>
<dbReference type="Pumba" id="Q6PJ69"/>
<dbReference type="Antibodypedia" id="19643">
    <property type="antibodies" value="93 antibodies from 15 providers"/>
</dbReference>
<dbReference type="DNASU" id="201292"/>
<dbReference type="Ensembl" id="ENST00000269383.8">
    <property type="protein sequence ID" value="ENSP00000269383.3"/>
    <property type="gene ID" value="ENSG00000141569.12"/>
</dbReference>
<dbReference type="GeneID" id="201292"/>
<dbReference type="KEGG" id="hsa:201292"/>
<dbReference type="MANE-Select" id="ENST00000269383.8">
    <property type="protein sequence ID" value="ENSP00000269383.3"/>
    <property type="RefSeq nucleotide sequence ID" value="NM_173547.4"/>
    <property type="RefSeq protein sequence ID" value="NP_775818.2"/>
</dbReference>
<dbReference type="UCSC" id="uc002jpx.4">
    <property type="organism name" value="human"/>
</dbReference>
<dbReference type="AGR" id="HGNC:27316"/>
<dbReference type="CTD" id="201292"/>
<dbReference type="DisGeNET" id="201292"/>
<dbReference type="GeneCards" id="TRIM65"/>
<dbReference type="HGNC" id="HGNC:27316">
    <property type="gene designation" value="TRIM65"/>
</dbReference>
<dbReference type="HPA" id="ENSG00000141569">
    <property type="expression patterns" value="Low tissue specificity"/>
</dbReference>
<dbReference type="MIM" id="619408">
    <property type="type" value="gene"/>
</dbReference>
<dbReference type="neXtProt" id="NX_Q6PJ69"/>
<dbReference type="OpenTargets" id="ENSG00000141569"/>
<dbReference type="PharmGKB" id="PA134877726"/>
<dbReference type="VEuPathDB" id="HostDB:ENSG00000141569"/>
<dbReference type="eggNOG" id="KOG2177">
    <property type="taxonomic scope" value="Eukaryota"/>
</dbReference>
<dbReference type="GeneTree" id="ENSGT00940000161851"/>
<dbReference type="HOGENOM" id="CLU_013137_0_2_1"/>
<dbReference type="InParanoid" id="Q6PJ69"/>
<dbReference type="OMA" id="ACTVNEC"/>
<dbReference type="OrthoDB" id="5951542at2759"/>
<dbReference type="PAN-GO" id="Q6PJ69">
    <property type="GO annotations" value="1 GO annotation based on evolutionary models"/>
</dbReference>
<dbReference type="PhylomeDB" id="Q6PJ69"/>
<dbReference type="TreeFam" id="TF351090"/>
<dbReference type="PathwayCommons" id="Q6PJ69"/>
<dbReference type="SignaLink" id="Q6PJ69"/>
<dbReference type="SIGNOR" id="Q6PJ69"/>
<dbReference type="UniPathway" id="UPA00143"/>
<dbReference type="BioGRID-ORCS" id="201292">
    <property type="hits" value="15 hits in 1191 CRISPR screens"/>
</dbReference>
<dbReference type="ChiTaRS" id="TRIM65">
    <property type="organism name" value="human"/>
</dbReference>
<dbReference type="GenomeRNAi" id="201292"/>
<dbReference type="Pharos" id="Q6PJ69">
    <property type="development level" value="Tbio"/>
</dbReference>
<dbReference type="PRO" id="PR:Q6PJ69"/>
<dbReference type="Proteomes" id="UP000005640">
    <property type="component" value="Chromosome 17"/>
</dbReference>
<dbReference type="RNAct" id="Q6PJ69">
    <property type="molecule type" value="protein"/>
</dbReference>
<dbReference type="Bgee" id="ENSG00000141569">
    <property type="expression patterns" value="Expressed in buccal mucosa cell and 108 other cell types or tissues"/>
</dbReference>
<dbReference type="ExpressionAtlas" id="Q6PJ69">
    <property type="expression patterns" value="baseline and differential"/>
</dbReference>
<dbReference type="GO" id="GO:0005737">
    <property type="term" value="C:cytoplasm"/>
    <property type="evidence" value="ECO:0000314"/>
    <property type="project" value="UniProt"/>
</dbReference>
<dbReference type="GO" id="GO:0005829">
    <property type="term" value="C:cytosol"/>
    <property type="evidence" value="ECO:0000314"/>
    <property type="project" value="HPA"/>
</dbReference>
<dbReference type="GO" id="GO:0005654">
    <property type="term" value="C:nucleoplasm"/>
    <property type="evidence" value="ECO:0000314"/>
    <property type="project" value="HPA"/>
</dbReference>
<dbReference type="GO" id="GO:0061630">
    <property type="term" value="F:ubiquitin protein ligase activity"/>
    <property type="evidence" value="ECO:0000314"/>
    <property type="project" value="UniProt"/>
</dbReference>
<dbReference type="GO" id="GO:0008270">
    <property type="term" value="F:zinc ion binding"/>
    <property type="evidence" value="ECO:0007669"/>
    <property type="project" value="UniProtKB-KW"/>
</dbReference>
<dbReference type="GO" id="GO:0140374">
    <property type="term" value="P:antiviral innate immune response"/>
    <property type="evidence" value="ECO:0007669"/>
    <property type="project" value="Ensembl"/>
</dbReference>
<dbReference type="GO" id="GO:0050728">
    <property type="term" value="P:negative regulation of inflammatory response"/>
    <property type="evidence" value="ECO:0000314"/>
    <property type="project" value="UniProt"/>
</dbReference>
<dbReference type="GO" id="GO:1900226">
    <property type="term" value="P:negative regulation of NLRP3 inflammasome complex assembly"/>
    <property type="evidence" value="ECO:0000314"/>
    <property type="project" value="UniProt"/>
</dbReference>
<dbReference type="GO" id="GO:0010508">
    <property type="term" value="P:positive regulation of autophagy"/>
    <property type="evidence" value="ECO:0000315"/>
    <property type="project" value="UniProtKB"/>
</dbReference>
<dbReference type="GO" id="GO:0032727">
    <property type="term" value="P:positive regulation of interferon-alpha production"/>
    <property type="evidence" value="ECO:0007669"/>
    <property type="project" value="Ensembl"/>
</dbReference>
<dbReference type="GO" id="GO:0032728">
    <property type="term" value="P:positive regulation of interferon-beta production"/>
    <property type="evidence" value="ECO:0000314"/>
    <property type="project" value="UniProt"/>
</dbReference>
<dbReference type="GO" id="GO:0032461">
    <property type="term" value="P:positive regulation of protein oligomerization"/>
    <property type="evidence" value="ECO:0007669"/>
    <property type="project" value="Ensembl"/>
</dbReference>
<dbReference type="GO" id="GO:0070936">
    <property type="term" value="P:protein K48-linked ubiquitination"/>
    <property type="evidence" value="ECO:0000314"/>
    <property type="project" value="UniProt"/>
</dbReference>
<dbReference type="GO" id="GO:0070534">
    <property type="term" value="P:protein K63-linked ubiquitination"/>
    <property type="evidence" value="ECO:0000314"/>
    <property type="project" value="UniProt"/>
</dbReference>
<dbReference type="GO" id="GO:0060337">
    <property type="term" value="P:type I interferon-mediated signaling pathway"/>
    <property type="evidence" value="ECO:0007669"/>
    <property type="project" value="Ensembl"/>
</dbReference>
<dbReference type="CDD" id="cd19835">
    <property type="entry name" value="Bbox2_TRIM65_C-IV"/>
    <property type="match status" value="1"/>
</dbReference>
<dbReference type="CDD" id="cd16609">
    <property type="entry name" value="RING-HC_TRIM65_C-IV"/>
    <property type="match status" value="1"/>
</dbReference>
<dbReference type="CDD" id="cd12896">
    <property type="entry name" value="SPRY_PRY_TRIM65"/>
    <property type="match status" value="1"/>
</dbReference>
<dbReference type="FunFam" id="2.60.120.920:FF:000061">
    <property type="entry name" value="Tripartite motif containing 65"/>
    <property type="match status" value="1"/>
</dbReference>
<dbReference type="FunFam" id="3.30.160.60:FF:002396">
    <property type="entry name" value="Tripartite motif containing 65"/>
    <property type="match status" value="1"/>
</dbReference>
<dbReference type="FunFam" id="3.30.40.10:FF:000492">
    <property type="entry name" value="Tripartite motif containing 65"/>
    <property type="match status" value="1"/>
</dbReference>
<dbReference type="Gene3D" id="2.60.120.920">
    <property type="match status" value="1"/>
</dbReference>
<dbReference type="Gene3D" id="3.30.160.60">
    <property type="entry name" value="Classic Zinc Finger"/>
    <property type="match status" value="1"/>
</dbReference>
<dbReference type="Gene3D" id="3.30.40.10">
    <property type="entry name" value="Zinc/RING finger domain, C3HC4 (zinc finger)"/>
    <property type="match status" value="1"/>
</dbReference>
<dbReference type="InterPro" id="IPR001870">
    <property type="entry name" value="B30.2/SPRY"/>
</dbReference>
<dbReference type="InterPro" id="IPR043136">
    <property type="entry name" value="B30.2/SPRY_sf"/>
</dbReference>
<dbReference type="InterPro" id="IPR003879">
    <property type="entry name" value="Butyrophylin_SPRY"/>
</dbReference>
<dbReference type="InterPro" id="IPR013320">
    <property type="entry name" value="ConA-like_dom_sf"/>
</dbReference>
<dbReference type="InterPro" id="IPR051051">
    <property type="entry name" value="E3_ubiq-ligase_TRIM/RNF"/>
</dbReference>
<dbReference type="InterPro" id="IPR003877">
    <property type="entry name" value="SPRY_dom"/>
</dbReference>
<dbReference type="InterPro" id="IPR048222">
    <property type="entry name" value="TRIM65_SPRY_PRY"/>
</dbReference>
<dbReference type="InterPro" id="IPR000315">
    <property type="entry name" value="Znf_B-box"/>
</dbReference>
<dbReference type="InterPro" id="IPR018957">
    <property type="entry name" value="Znf_C3HC4_RING-type"/>
</dbReference>
<dbReference type="InterPro" id="IPR001841">
    <property type="entry name" value="Znf_RING"/>
</dbReference>
<dbReference type="InterPro" id="IPR013083">
    <property type="entry name" value="Znf_RING/FYVE/PHD"/>
</dbReference>
<dbReference type="InterPro" id="IPR017907">
    <property type="entry name" value="Znf_RING_CS"/>
</dbReference>
<dbReference type="PANTHER" id="PTHR25465">
    <property type="entry name" value="B-BOX DOMAIN CONTAINING"/>
    <property type="match status" value="1"/>
</dbReference>
<dbReference type="PANTHER" id="PTHR25465:SF14">
    <property type="entry name" value="E3 UBIQUITIN-PROTEIN LIGASE TRIM65"/>
    <property type="match status" value="1"/>
</dbReference>
<dbReference type="Pfam" id="PF00622">
    <property type="entry name" value="SPRY"/>
    <property type="match status" value="1"/>
</dbReference>
<dbReference type="Pfam" id="PF00643">
    <property type="entry name" value="zf-B_box"/>
    <property type="match status" value="1"/>
</dbReference>
<dbReference type="Pfam" id="PF00097">
    <property type="entry name" value="zf-C3HC4"/>
    <property type="match status" value="1"/>
</dbReference>
<dbReference type="PRINTS" id="PR01407">
    <property type="entry name" value="BUTYPHLNCDUF"/>
</dbReference>
<dbReference type="SMART" id="SM00336">
    <property type="entry name" value="BBOX"/>
    <property type="match status" value="1"/>
</dbReference>
<dbReference type="SMART" id="SM00184">
    <property type="entry name" value="RING"/>
    <property type="match status" value="1"/>
</dbReference>
<dbReference type="SMART" id="SM00449">
    <property type="entry name" value="SPRY"/>
    <property type="match status" value="1"/>
</dbReference>
<dbReference type="SUPFAM" id="SSF57845">
    <property type="entry name" value="B-box zinc-binding domain"/>
    <property type="match status" value="1"/>
</dbReference>
<dbReference type="SUPFAM" id="SSF49899">
    <property type="entry name" value="Concanavalin A-like lectins/glucanases"/>
    <property type="match status" value="1"/>
</dbReference>
<dbReference type="SUPFAM" id="SSF57850">
    <property type="entry name" value="RING/U-box"/>
    <property type="match status" value="1"/>
</dbReference>
<dbReference type="PROSITE" id="PS50188">
    <property type="entry name" value="B302_SPRY"/>
    <property type="match status" value="1"/>
</dbReference>
<dbReference type="PROSITE" id="PS50119">
    <property type="entry name" value="ZF_BBOX"/>
    <property type="match status" value="1"/>
</dbReference>
<dbReference type="PROSITE" id="PS00518">
    <property type="entry name" value="ZF_RING_1"/>
    <property type="match status" value="1"/>
</dbReference>
<dbReference type="PROSITE" id="PS50089">
    <property type="entry name" value="ZF_RING_2"/>
    <property type="match status" value="1"/>
</dbReference>
<gene>
    <name type="primary">TRIM65</name>
</gene>
<accession>Q6PJ69</accession>
<accession>Q4G0F0</accession>
<accession>Q6DKJ6</accession>
<accession>Q9BRP6</accession>